<sequence>MVEVSEKPNTQDDGVSKQENRNPASSSSSTSDKEKVAKKGNSDATKSSTPEDLDAQLAHLPEHEREILKQQLFIPDAKATYGTLFRYATRNDMIFLAIVSLASIAAGAALPLFTVLFGSLAGTFRDIALHRITYDEFNSILTRNSLYFVYLGIAQFILLYVSTVGFIYVGEHITQKIRAKYLHAILRQNIGFFDKLGAGEVTTRITADTNLIQDGISEKVGLTLTALSTFFSAFIIGYVRYWKLALICSSTIVAMILVMGGISRFVVKSGRMTLVSYGEGGTVAEEVISSIRNATAFGTQEKLARQYEVHLKEARKWGRRLQMMLGIMFGSMMAIMYSNYGLGFWMGSRFLVGGETDLSAIVNILLAIVIGSFSIGNVAPNTQAFASAISAGAKIFSTIDRVSAIDPGSDEGDTIENVEGTIEFRGIKHIYPSRPEVVVMEDINLVVPKGKTTALVGPSGSGKSTVVGLLERFYNPVSGSVLLDGRDIKTLNLRWLRQQISLVSQEPTLFGTTIFENIRLGLIGSPMENESEEQIKERIVSAAKEANAHDFIMGLPDGYATDVGQRGFLLSGGQKQRIAIARAIVSDPKILLLDEATSALDTKSEGVVQAALDAASRGRTTIVIAHRLSTIKSADNIVVIVGGRIAEQGTHDELVDKKGTYLQLVEAQKINEERGEESEDEAVLEKEKEISRQISVPAKSVNSGKYPDEDVEANLGRIDTKKSLSSVILSQKRSQEKETEYSLGTLIRFIAGFNKPERLIMLCGFFFAVLSGAGQPVQSVFFAKGITTLSLPPSLYGKLREDANFWSLMFLMLGLVQLVTQSAQGVIFAICSESLIYRARSKSFRAMLRQDIAFFDLPENSTGALTSFLSTETKHLSGVSGATLGTILMVSTTLIVALTVALAFGWKLALVCISTVPVLLLCGFYRFWILAQFQTRAKKAYESSASYACEATSSIRTVASLTREQGVMEIYEGQLNDQAKKSLRSVAKSSLLYAASQSFSFFCLALGFWYGGGLLGKGEYNAFQFFLCISCVIFGSQSAGIVFSFSPDMGKAKSAAADFKRLFDRVPTIDIESPDGEKLETVEGTIEFRDVHFRYPTRPEQPVLRGLNLTVKPGQYIALVGPSGCGKSTTIALVERFYDTLSGGVYIDGKDISRLNVNSYRSHLALVSQEPTLYQGTIRDNVLLGVDRDDVPDEQVFAACKAANIYDFIMSLPDGFGTVVGSKGSMLSGGQKQRIAIARALIRDPKVLLLDEATSALDSESEKVVQAALDAAAKGRTTIAVAHRLSTIQKADIIYVFDQGRIVESGTHHELLQNKGRYYELVHMQSLEKTQ</sequence>
<evidence type="ECO:0000250" key="1">
    <source>
        <dbReference type="UniProtKB" id="F2T1C4"/>
    </source>
</evidence>
<evidence type="ECO:0000255" key="2"/>
<evidence type="ECO:0000255" key="3">
    <source>
        <dbReference type="PROSITE-ProRule" id="PRU00434"/>
    </source>
</evidence>
<evidence type="ECO:0000255" key="4">
    <source>
        <dbReference type="PROSITE-ProRule" id="PRU00441"/>
    </source>
</evidence>
<evidence type="ECO:0000255" key="5">
    <source>
        <dbReference type="PROSITE-ProRule" id="PRU00498"/>
    </source>
</evidence>
<evidence type="ECO:0000256" key="6">
    <source>
        <dbReference type="SAM" id="MobiDB-lite"/>
    </source>
</evidence>
<evidence type="ECO:0000269" key="7">
    <source>
    </source>
</evidence>
<evidence type="ECO:0000269" key="8">
    <source>
    </source>
</evidence>
<evidence type="ECO:0000269" key="9">
    <source>
    </source>
</evidence>
<evidence type="ECO:0000269" key="10">
    <source>
    </source>
</evidence>
<evidence type="ECO:0000303" key="11">
    <source>
    </source>
</evidence>
<evidence type="ECO:0000305" key="12"/>
<evidence type="ECO:0000305" key="13">
    <source>
    </source>
</evidence>
<organism>
    <name type="scientific">Trichophyton interdigitale (strain MR816)</name>
    <dbReference type="NCBI Taxonomy" id="1215338"/>
    <lineage>
        <taxon>Eukaryota</taxon>
        <taxon>Fungi</taxon>
        <taxon>Dikarya</taxon>
        <taxon>Ascomycota</taxon>
        <taxon>Pezizomycotina</taxon>
        <taxon>Eurotiomycetes</taxon>
        <taxon>Eurotiomycetidae</taxon>
        <taxon>Onygenales</taxon>
        <taxon>Arthrodermataceae</taxon>
        <taxon>Trichophyton</taxon>
    </lineage>
</organism>
<gene>
    <name evidence="11" type="primary">MDR2</name>
    <name type="ORF">H109_00372</name>
</gene>
<dbReference type="EMBL" id="AOKY01000033">
    <property type="protein sequence ID" value="KDB27804.1"/>
    <property type="molecule type" value="Genomic_DNA"/>
</dbReference>
<dbReference type="SMR" id="A0A059JJ46"/>
<dbReference type="STRING" id="1215338.A0A059JJ46"/>
<dbReference type="DrugBank" id="DB00857">
    <property type="generic name" value="Terbinafine"/>
</dbReference>
<dbReference type="GlyCosmos" id="A0A059JJ46">
    <property type="glycosylation" value="4 sites, No reported glycans"/>
</dbReference>
<dbReference type="HOGENOM" id="CLU_000604_17_2_1"/>
<dbReference type="OMA" id="IGMAAPY"/>
<dbReference type="OrthoDB" id="6500128at2759"/>
<dbReference type="Proteomes" id="UP000024533">
    <property type="component" value="Unassembled WGS sequence"/>
</dbReference>
<dbReference type="GO" id="GO:0005743">
    <property type="term" value="C:mitochondrial inner membrane"/>
    <property type="evidence" value="ECO:0007669"/>
    <property type="project" value="TreeGrafter"/>
</dbReference>
<dbReference type="GO" id="GO:0005886">
    <property type="term" value="C:plasma membrane"/>
    <property type="evidence" value="ECO:0007669"/>
    <property type="project" value="UniProtKB-SubCell"/>
</dbReference>
<dbReference type="GO" id="GO:0015421">
    <property type="term" value="F:ABC-type oligopeptide transporter activity"/>
    <property type="evidence" value="ECO:0007669"/>
    <property type="project" value="TreeGrafter"/>
</dbReference>
<dbReference type="GO" id="GO:0005524">
    <property type="term" value="F:ATP binding"/>
    <property type="evidence" value="ECO:0007669"/>
    <property type="project" value="UniProtKB-KW"/>
</dbReference>
<dbReference type="GO" id="GO:0016887">
    <property type="term" value="F:ATP hydrolysis activity"/>
    <property type="evidence" value="ECO:0007669"/>
    <property type="project" value="InterPro"/>
</dbReference>
<dbReference type="GO" id="GO:0090374">
    <property type="term" value="P:oligopeptide export from mitochondrion"/>
    <property type="evidence" value="ECO:0007669"/>
    <property type="project" value="TreeGrafter"/>
</dbReference>
<dbReference type="CDD" id="cd18577">
    <property type="entry name" value="ABC_6TM_Pgp_ABCB1_D1_like"/>
    <property type="match status" value="1"/>
</dbReference>
<dbReference type="CDD" id="cd18578">
    <property type="entry name" value="ABC_6TM_Pgp_ABCB1_D2_like"/>
    <property type="match status" value="1"/>
</dbReference>
<dbReference type="CDD" id="cd03249">
    <property type="entry name" value="ABC_MTABC3_MDL1_MDL2"/>
    <property type="match status" value="2"/>
</dbReference>
<dbReference type="FunFam" id="1.20.1560.10:FF:000102">
    <property type="entry name" value="ABC multidrug transporter Mdr1"/>
    <property type="match status" value="1"/>
</dbReference>
<dbReference type="FunFam" id="1.20.1560.10:FF:000009">
    <property type="entry name" value="ABC transporter B family member 1"/>
    <property type="match status" value="1"/>
</dbReference>
<dbReference type="FunFam" id="3.40.50.300:FF:000251">
    <property type="entry name" value="ABC transporter B family member 19"/>
    <property type="match status" value="1"/>
</dbReference>
<dbReference type="FunFam" id="3.40.50.300:FF:000302">
    <property type="entry name" value="ATP-binding cassette subfamily B member 5"/>
    <property type="match status" value="1"/>
</dbReference>
<dbReference type="Gene3D" id="1.20.1560.10">
    <property type="entry name" value="ABC transporter type 1, transmembrane domain"/>
    <property type="match status" value="1"/>
</dbReference>
<dbReference type="Gene3D" id="3.40.50.300">
    <property type="entry name" value="P-loop containing nucleotide triphosphate hydrolases"/>
    <property type="match status" value="2"/>
</dbReference>
<dbReference type="InterPro" id="IPR003593">
    <property type="entry name" value="AAA+_ATPase"/>
</dbReference>
<dbReference type="InterPro" id="IPR011527">
    <property type="entry name" value="ABC1_TM_dom"/>
</dbReference>
<dbReference type="InterPro" id="IPR036640">
    <property type="entry name" value="ABC1_TM_sf"/>
</dbReference>
<dbReference type="InterPro" id="IPR003439">
    <property type="entry name" value="ABC_transporter-like_ATP-bd"/>
</dbReference>
<dbReference type="InterPro" id="IPR017871">
    <property type="entry name" value="ABC_transporter-like_CS"/>
</dbReference>
<dbReference type="InterPro" id="IPR027417">
    <property type="entry name" value="P-loop_NTPase"/>
</dbReference>
<dbReference type="InterPro" id="IPR039421">
    <property type="entry name" value="Type_1_exporter"/>
</dbReference>
<dbReference type="PANTHER" id="PTHR43394:SF1">
    <property type="entry name" value="ATP-BINDING CASSETTE SUB-FAMILY B MEMBER 10, MITOCHONDRIAL"/>
    <property type="match status" value="1"/>
</dbReference>
<dbReference type="PANTHER" id="PTHR43394">
    <property type="entry name" value="ATP-DEPENDENT PERMEASE MDL1, MITOCHONDRIAL"/>
    <property type="match status" value="1"/>
</dbReference>
<dbReference type="Pfam" id="PF00664">
    <property type="entry name" value="ABC_membrane"/>
    <property type="match status" value="2"/>
</dbReference>
<dbReference type="Pfam" id="PF00005">
    <property type="entry name" value="ABC_tran"/>
    <property type="match status" value="2"/>
</dbReference>
<dbReference type="SMART" id="SM00382">
    <property type="entry name" value="AAA"/>
    <property type="match status" value="2"/>
</dbReference>
<dbReference type="SUPFAM" id="SSF90123">
    <property type="entry name" value="ABC transporter transmembrane region"/>
    <property type="match status" value="2"/>
</dbReference>
<dbReference type="SUPFAM" id="SSF52540">
    <property type="entry name" value="P-loop containing nucleoside triphosphate hydrolases"/>
    <property type="match status" value="2"/>
</dbReference>
<dbReference type="PROSITE" id="PS50929">
    <property type="entry name" value="ABC_TM1F"/>
    <property type="match status" value="2"/>
</dbReference>
<dbReference type="PROSITE" id="PS00211">
    <property type="entry name" value="ABC_TRANSPORTER_1"/>
    <property type="match status" value="2"/>
</dbReference>
<dbReference type="PROSITE" id="PS50893">
    <property type="entry name" value="ABC_TRANSPORTER_2"/>
    <property type="match status" value="2"/>
</dbReference>
<reference key="1">
    <citation type="journal article" date="2018" name="Genetics">
        <title>Whole-genome analysis illustrates global clonal population structure of the ubiquitous dermatophyte pathogen Trichophyton rubrum.</title>
        <authorList>
            <person name="Persinoti G.F."/>
            <person name="Martinez D.A."/>
            <person name="Li W."/>
            <person name="Doegen A."/>
            <person name="Billmyre R.B."/>
            <person name="Averette A."/>
            <person name="Goldberg J.M."/>
            <person name="Shea T."/>
            <person name="Young S."/>
            <person name="Zeng Q."/>
            <person name="Oliver B.G."/>
            <person name="Barton R."/>
            <person name="Metin B."/>
            <person name="Hilmioglu-Polat S."/>
            <person name="Ilkit M."/>
            <person name="Graeser Y."/>
            <person name="Martinez-Rossi N.M."/>
            <person name="White T.C."/>
            <person name="Heitman J."/>
            <person name="Cuomo C.A."/>
        </authorList>
    </citation>
    <scope>NUCLEOTIDE SEQUENCE [LARGE SCALE GENOMIC DNA]</scope>
    <source>
        <strain>MR816</strain>
    </source>
</reference>
<reference key="2">
    <citation type="journal article" date="2006" name="J. Med. Microbiol.">
        <title>Role of the ABC transporter TruMDR2 in terbinafine, 4-nitroquinoline N-oxide and ethidium bromide susceptibility in Trichophyton rubrum.</title>
        <authorList>
            <person name="Fachin A.L."/>
            <person name="Ferreira-Nozawa M.S."/>
            <person name="Maccheroni W. Jr."/>
            <person name="Martinez-Rossi N.M."/>
        </authorList>
    </citation>
    <scope>IDENTIFICATION</scope>
    <scope>FUNCTION</scope>
    <scope>INDUCTION</scope>
    <scope>DISRUPTION PHENOTYPE</scope>
</reference>
<reference key="3">
    <citation type="journal article" date="2007" name="FEMS Microbiol. Lett.">
        <title>Analysis of Trichophyton rubrum gene expression in response to cytotoxic drugs.</title>
        <authorList>
            <person name="Paiao F.G."/>
            <person name="Segato F."/>
            <person name="Cursino-Santos J.R."/>
            <person name="Peres N.T."/>
            <person name="Martinez-Rossi N.M."/>
        </authorList>
    </citation>
    <scope>INDUCTION</scope>
</reference>
<reference key="4">
    <citation type="journal article" date="2009" name="J. Med. Microbiol.">
        <title>Membrane transporter proteins are involved in Trichophyton rubrum pathogenesis.</title>
        <authorList>
            <person name="Maranhao F.C."/>
            <person name="Paiao F.G."/>
            <person name="Fachin A.L."/>
            <person name="Martinez-Rossi N.M."/>
        </authorList>
    </citation>
    <scope>FUNCTION</scope>
    <scope>INDUCTION</scope>
    <scope>DISRUPTION PHENOTYPE</scope>
</reference>
<reference key="5">
    <citation type="journal article" date="2016" name="J. Med. Microbiol.">
        <title>Compensatory expression of multidrug-resistance genes encoding ABC transporters in dermatophytes.</title>
        <authorList>
            <person name="Martins M.P."/>
            <person name="Franceschini A.C.C."/>
            <person name="Jacob T.R."/>
            <person name="Rossi A."/>
            <person name="Martinez-Rossi N.M."/>
        </authorList>
    </citation>
    <scope>INDUCTION</scope>
    <scope>DISRUPTION PHENOTYPE</scope>
</reference>
<comment type="function">
    <text evidence="7 9">Pleiotropic ABC efflux transporter that may be involved in the modulation susceptibility to a wide range of unrelated cytotoxic compounds, including terbinafine, 4-nitroquinoline N-oxide, and ethidium bromide (PubMed:16849730). May play a role in pathogenicity (PubMed:19141731).</text>
</comment>
<comment type="catalytic activity">
    <reaction evidence="1">
        <text>itraconazole(in) + ATP + H2O = itraconazole(out) + ADP + phosphate + H(+)</text>
        <dbReference type="Rhea" id="RHEA:33503"/>
        <dbReference type="ChEBI" id="CHEBI:6076"/>
        <dbReference type="ChEBI" id="CHEBI:15377"/>
        <dbReference type="ChEBI" id="CHEBI:15378"/>
        <dbReference type="ChEBI" id="CHEBI:30616"/>
        <dbReference type="ChEBI" id="CHEBI:43474"/>
        <dbReference type="ChEBI" id="CHEBI:456216"/>
    </reaction>
    <physiologicalReaction direction="left-to-right" evidence="1">
        <dbReference type="Rhea" id="RHEA:33504"/>
    </physiologicalReaction>
</comment>
<comment type="subcellular location">
    <subcellularLocation>
        <location evidence="12">Cell membrane</location>
        <topology evidence="2">Multi-pass membrane protein</topology>
    </subcellularLocation>
</comment>
<comment type="induction">
    <text evidence="7 8 9 10">Expression is induced upon exposure to a wide range of unrelated cytotoxic compounds, including acriflavine, benomyl, ethidium bromide, ketoconazole, chloramphenicol, griseofulvin, fluconazole, imazalil, itraconazole, methotrexate, 4-nitroquinoline N-oxide, tioconazolethe, or the allylamine terbinafine (PubMed:16849730, PubMed:17425668, PubMed:27121717). Expression in up-regulated in the presence of keratin (PubMed:19141731).</text>
</comment>
<comment type="disruption phenotype">
    <text evidence="7 9 10">Leads to increased sensitivity to terbinafine, 4-nitroquinoline N-oxide, and ethidium bromide (PubMed:16849730). Leads to a reduction in infecting activity, characterized by low growth on human nails (PubMed:19141731). Impairs the MDR4 induction when the fungus is challenged with amphotericin B or terbinafine (PubMed:27121717).</text>
</comment>
<comment type="similarity">
    <text evidence="12">Belongs to the ABC transporter superfamily. ABCB family. Multidrug resistance exporter (TC 3.A.1.201) subfamily.</text>
</comment>
<comment type="caution">
    <text evidence="13">This protein was first identified as a Trichophyton rubrum transporter and called TruMDR2, but it was further realized that the isolate used for the identification was a Trichophyton interdigitale isolate.</text>
</comment>
<proteinExistence type="evidence at transcript level"/>
<accession>A0A059JJ46</accession>
<protein>
    <recommendedName>
        <fullName evidence="11">ABC multidrug transporter MDR2</fullName>
    </recommendedName>
    <alternativeName>
        <fullName evidence="11">Multidrug resistance protein 2</fullName>
    </alternativeName>
</protein>
<keyword id="KW-0067">ATP-binding</keyword>
<keyword id="KW-1003">Cell membrane</keyword>
<keyword id="KW-0325">Glycoprotein</keyword>
<keyword id="KW-0472">Membrane</keyword>
<keyword id="KW-0547">Nucleotide-binding</keyword>
<keyword id="KW-1185">Reference proteome</keyword>
<keyword id="KW-0677">Repeat</keyword>
<keyword id="KW-0812">Transmembrane</keyword>
<keyword id="KW-1133">Transmembrane helix</keyword>
<keyword id="KW-0813">Transport</keyword>
<feature type="chain" id="PRO_0000447179" description="ABC multidrug transporter MDR2">
    <location>
        <begin position="1"/>
        <end position="1331"/>
    </location>
</feature>
<feature type="transmembrane region" description="Helical" evidence="2 4">
    <location>
        <begin position="93"/>
        <end position="113"/>
    </location>
</feature>
<feature type="transmembrane region" description="Helical" evidence="2 4">
    <location>
        <begin position="147"/>
        <end position="167"/>
    </location>
</feature>
<feature type="transmembrane region" description="Helical" evidence="2 4">
    <location>
        <begin position="219"/>
        <end position="239"/>
    </location>
</feature>
<feature type="transmembrane region" description="Helical" evidence="2 4">
    <location>
        <begin position="242"/>
        <end position="262"/>
    </location>
</feature>
<feature type="transmembrane region" description="Helical" evidence="2 4">
    <location>
        <begin position="325"/>
        <end position="345"/>
    </location>
</feature>
<feature type="transmembrane region" description="Helical" evidence="2 4">
    <location>
        <begin position="358"/>
        <end position="378"/>
    </location>
</feature>
<feature type="transmembrane region" description="Helical" evidence="2 4">
    <location>
        <begin position="762"/>
        <end position="782"/>
    </location>
</feature>
<feature type="transmembrane region" description="Helical" evidence="2 4">
    <location>
        <begin position="810"/>
        <end position="830"/>
    </location>
</feature>
<feature type="transmembrane region" description="Helical" evidence="2 4">
    <location>
        <begin position="884"/>
        <end position="904"/>
    </location>
</feature>
<feature type="transmembrane region" description="Helical" evidence="2 4">
    <location>
        <begin position="910"/>
        <end position="930"/>
    </location>
</feature>
<feature type="transmembrane region" description="Helical" evidence="2 4">
    <location>
        <begin position="995"/>
        <end position="1015"/>
    </location>
</feature>
<feature type="transmembrane region" description="Helical" evidence="2 4">
    <location>
        <begin position="1025"/>
        <end position="1045"/>
    </location>
</feature>
<feature type="domain" description="ABC transmembrane type-1 1" evidence="4">
    <location>
        <begin position="97"/>
        <end position="387"/>
    </location>
</feature>
<feature type="domain" description="ABC transporter 1" evidence="3">
    <location>
        <begin position="422"/>
        <end position="667"/>
    </location>
</feature>
<feature type="domain" description="ABC transmembrane type-1 2" evidence="4">
    <location>
        <begin position="764"/>
        <end position="1051"/>
    </location>
</feature>
<feature type="domain" description="ABC transporter 2" evidence="3">
    <location>
        <begin position="1086"/>
        <end position="1324"/>
    </location>
</feature>
<feature type="region of interest" description="Disordered" evidence="6">
    <location>
        <begin position="1"/>
        <end position="51"/>
    </location>
</feature>
<feature type="compositionally biased region" description="Basic and acidic residues" evidence="6">
    <location>
        <begin position="1"/>
        <end position="20"/>
    </location>
</feature>
<feature type="compositionally biased region" description="Basic and acidic residues" evidence="6">
    <location>
        <begin position="31"/>
        <end position="41"/>
    </location>
</feature>
<feature type="binding site" evidence="3">
    <location>
        <begin position="457"/>
        <end position="464"/>
    </location>
    <ligand>
        <name>ATP</name>
        <dbReference type="ChEBI" id="CHEBI:30616"/>
    </ligand>
</feature>
<feature type="binding site" evidence="3">
    <location>
        <begin position="1121"/>
        <end position="1128"/>
    </location>
    <ligand>
        <name>ATP</name>
        <dbReference type="ChEBI" id="CHEBI:30616"/>
    </ligand>
</feature>
<feature type="glycosylation site" description="N-linked (GlcNAc...) asparagine" evidence="5">
    <location>
        <position position="293"/>
    </location>
</feature>
<feature type="glycosylation site" description="N-linked (GlcNAc...) asparagine" evidence="5">
    <location>
        <position position="529"/>
    </location>
</feature>
<feature type="glycosylation site" description="N-linked (GlcNAc...) asparagine" evidence="5">
    <location>
        <position position="860"/>
    </location>
</feature>
<feature type="glycosylation site" description="N-linked (GlcNAc...) asparagine" evidence="5">
    <location>
        <position position="1108"/>
    </location>
</feature>
<name>MDR2_TRIIM</name>